<reference key="1">
    <citation type="journal article" date="2004" name="Proc. Natl. Acad. Sci. U.S.A.">
        <title>The diploid genome sequence of Candida albicans.</title>
        <authorList>
            <person name="Jones T."/>
            <person name="Federspiel N.A."/>
            <person name="Chibana H."/>
            <person name="Dungan J."/>
            <person name="Kalman S."/>
            <person name="Magee B.B."/>
            <person name="Newport G."/>
            <person name="Thorstenson Y.R."/>
            <person name="Agabian N."/>
            <person name="Magee P.T."/>
            <person name="Davis R.W."/>
            <person name="Scherer S."/>
        </authorList>
    </citation>
    <scope>NUCLEOTIDE SEQUENCE [LARGE SCALE GENOMIC DNA]</scope>
    <source>
        <strain>SC5314 / ATCC MYA-2876</strain>
    </source>
</reference>
<reference key="2">
    <citation type="journal article" date="2007" name="Genome Biol.">
        <title>Assembly of the Candida albicans genome into sixteen supercontigs aligned on the eight chromosomes.</title>
        <authorList>
            <person name="van het Hoog M."/>
            <person name="Rast T.J."/>
            <person name="Martchenko M."/>
            <person name="Grindle S."/>
            <person name="Dignard D."/>
            <person name="Hogues H."/>
            <person name="Cuomo C."/>
            <person name="Berriman M."/>
            <person name="Scherer S."/>
            <person name="Magee B.B."/>
            <person name="Whiteway M."/>
            <person name="Chibana H."/>
            <person name="Nantel A."/>
            <person name="Magee P.T."/>
        </authorList>
    </citation>
    <scope>GENOME REANNOTATION</scope>
    <source>
        <strain>SC5314 / ATCC MYA-2876</strain>
    </source>
</reference>
<reference key="3">
    <citation type="journal article" date="2013" name="Genome Biol.">
        <title>Assembly of a phased diploid Candida albicans genome facilitates allele-specific measurements and provides a simple model for repeat and indel structure.</title>
        <authorList>
            <person name="Muzzey D."/>
            <person name="Schwartz K."/>
            <person name="Weissman J.S."/>
            <person name="Sherlock G."/>
        </authorList>
    </citation>
    <scope>NUCLEOTIDE SEQUENCE [LARGE SCALE GENOMIC DNA]</scope>
    <scope>GENOME REANNOTATION</scope>
    <source>
        <strain>SC5314 / ATCC MYA-2876</strain>
    </source>
</reference>
<reference key="4">
    <citation type="journal article" date="2004" name="Antimicrob. Agents Chemother.">
        <title>Comparison of gene expression profiles of Candida albicans azole-resistant clinical isolates and laboratory strains exposed to drugs inducing multidrug transporters.</title>
        <authorList>
            <person name="Karababa M."/>
            <person name="Coste A.T."/>
            <person name="Rognon B."/>
            <person name="Bille J."/>
            <person name="Sanglard D."/>
        </authorList>
    </citation>
    <scope>INDUCTION</scope>
</reference>
<keyword id="KW-0072">Autophagy</keyword>
<keyword id="KW-0472">Membrane</keyword>
<keyword id="KW-0653">Protein transport</keyword>
<keyword id="KW-1185">Reference proteome</keyword>
<keyword id="KW-0808">Transferase</keyword>
<keyword id="KW-0813">Transport</keyword>
<keyword id="KW-0833">Ubl conjugation pathway</keyword>
<name>ATG10_CANAL</name>
<feature type="chain" id="PRO_0000096186" description="Ubiquitin-like-conjugating enzyme ATG10">
    <location>
        <begin position="1"/>
        <end position="177"/>
    </location>
</feature>
<feature type="active site" description="Glycyl thioester intermediate" evidence="1">
    <location>
        <position position="135"/>
    </location>
</feature>
<accession>Q5AEI2</accession>
<accession>A0A1D8PJJ0</accession>
<evidence type="ECO:0000250" key="1"/>
<evidence type="ECO:0000269" key="2">
    <source>
    </source>
</evidence>
<evidence type="ECO:0000305" key="3"/>
<organism>
    <name type="scientific">Candida albicans (strain SC5314 / ATCC MYA-2876)</name>
    <name type="common">Yeast</name>
    <dbReference type="NCBI Taxonomy" id="237561"/>
    <lineage>
        <taxon>Eukaryota</taxon>
        <taxon>Fungi</taxon>
        <taxon>Dikarya</taxon>
        <taxon>Ascomycota</taxon>
        <taxon>Saccharomycotina</taxon>
        <taxon>Pichiomycetes</taxon>
        <taxon>Debaryomycetaceae</taxon>
        <taxon>Candida/Lodderomyces clade</taxon>
        <taxon>Candida</taxon>
    </lineage>
</organism>
<comment type="function">
    <text evidence="1">E2-like enzyme required for the cytoplasm to vacuole transport (Cvt), autophagy and nucleophagy. Acts as an E2-like enzyme that catalyzes the conjugation of ATG12 to ATG5. ATG12 conjugation to ATG5 is required for proper localization of ATG8 to the preautophagosomal structure (PAS). Likely serves as an ATG5-recognition molecule (By similarity).</text>
</comment>
<comment type="subunit">
    <text evidence="1">Forms homooligomers.</text>
</comment>
<comment type="subcellular location">
    <subcellularLocation>
        <location evidence="1">Preautophagosomal structure membrane</location>
        <topology evidence="1">Peripheral membrane protein</topology>
    </subcellularLocation>
</comment>
<comment type="induction">
    <text evidence="2">Expression is decreased upon fluphenazine treatment.</text>
</comment>
<comment type="similarity">
    <text evidence="3">Belongs to the ATG10 family.</text>
</comment>
<proteinExistence type="evidence at transcript level"/>
<sequence length="177" mass="20668">MITNQQFNDNIEEFISIMLANLKLKGTDFEFSVNNNYVNKWNIDKMYSFVSVSVKQLRIDFTISFDDLYGVPLLNMRLYDNDTFLTSPMAQRTLAVGICRVDLHNHHLLQQPWLQVHPCETLQTIDSHLKNTPTCKYNSVIQYLCCWFGLYGLPSIFPQFSVRPNIYINNVQSCKIK</sequence>
<gene>
    <name type="primary">ATG10</name>
    <name type="ordered locus">CAALFM_C302930WA</name>
    <name type="ORF">CaO19.286</name>
    <name type="ORF">CaO19.7918</name>
</gene>
<protein>
    <recommendedName>
        <fullName>Ubiquitin-like-conjugating enzyme ATG10</fullName>
        <ecNumber>2.3.2.-</ecNumber>
    </recommendedName>
    <alternativeName>
        <fullName>Autophagy-related protein 10</fullName>
    </alternativeName>
</protein>
<dbReference type="EC" id="2.3.2.-"/>
<dbReference type="EMBL" id="CP017625">
    <property type="protein sequence ID" value="AOW28324.1"/>
    <property type="molecule type" value="Genomic_DNA"/>
</dbReference>
<dbReference type="RefSeq" id="XP_719983.1">
    <property type="nucleotide sequence ID" value="XM_714890.1"/>
</dbReference>
<dbReference type="SMR" id="Q5AEI2"/>
<dbReference type="EnsemblFungi" id="C3_02930W_A-T">
    <property type="protein sequence ID" value="C3_02930W_A-T-p1"/>
    <property type="gene ID" value="C3_02930W_A"/>
</dbReference>
<dbReference type="GeneID" id="3638380"/>
<dbReference type="KEGG" id="cal:CAALFM_C302930WA"/>
<dbReference type="CGD" id="CAL0000193637">
    <property type="gene designation" value="orf19.7918"/>
</dbReference>
<dbReference type="VEuPathDB" id="FungiDB:C3_02930W_A"/>
<dbReference type="eggNOG" id="ENOG502T5Z6">
    <property type="taxonomic scope" value="Eukaryota"/>
</dbReference>
<dbReference type="HOGENOM" id="CLU_096164_0_0_1"/>
<dbReference type="InParanoid" id="Q5AEI2"/>
<dbReference type="OrthoDB" id="5949865at2759"/>
<dbReference type="PRO" id="PR:Q5AEI2"/>
<dbReference type="Proteomes" id="UP000000559">
    <property type="component" value="Chromosome 3"/>
</dbReference>
<dbReference type="GO" id="GO:0000407">
    <property type="term" value="C:phagophore assembly site"/>
    <property type="evidence" value="ECO:0000318"/>
    <property type="project" value="GO_Central"/>
</dbReference>
<dbReference type="GO" id="GO:0034045">
    <property type="term" value="C:phagophore assembly site membrane"/>
    <property type="evidence" value="ECO:0007669"/>
    <property type="project" value="UniProtKB-SubCell"/>
</dbReference>
<dbReference type="GO" id="GO:0019787">
    <property type="term" value="F:ubiquitin-like protein transferase activity"/>
    <property type="evidence" value="ECO:0000318"/>
    <property type="project" value="GO_Central"/>
</dbReference>
<dbReference type="GO" id="GO:0000045">
    <property type="term" value="P:autophagosome assembly"/>
    <property type="evidence" value="ECO:0000318"/>
    <property type="project" value="GO_Central"/>
</dbReference>
<dbReference type="GO" id="GO:0061723">
    <property type="term" value="P:glycophagy"/>
    <property type="evidence" value="ECO:0000318"/>
    <property type="project" value="GO_Central"/>
</dbReference>
<dbReference type="GO" id="GO:0044804">
    <property type="term" value="P:nucleophagy"/>
    <property type="evidence" value="ECO:0000318"/>
    <property type="project" value="GO_Central"/>
</dbReference>
<dbReference type="GO" id="GO:0015031">
    <property type="term" value="P:protein transport"/>
    <property type="evidence" value="ECO:0007669"/>
    <property type="project" value="UniProtKB-KW"/>
</dbReference>
<dbReference type="Gene3D" id="3.30.1460.50">
    <property type="match status" value="1"/>
</dbReference>
<dbReference type="InterPro" id="IPR007135">
    <property type="entry name" value="Atg3/Atg10"/>
</dbReference>
<dbReference type="PANTHER" id="PTHR12866:SF5">
    <property type="entry name" value="AUTOPHAGY-RELATED 10, ISOFORM B"/>
    <property type="match status" value="1"/>
</dbReference>
<dbReference type="PANTHER" id="PTHR12866">
    <property type="entry name" value="UBIQUITIN-LIKE-CONJUGATING ENZYME ATG3"/>
    <property type="match status" value="1"/>
</dbReference>
<dbReference type="Pfam" id="PF03987">
    <property type="entry name" value="Autophagy_act_C"/>
    <property type="match status" value="1"/>
</dbReference>